<sequence>MVDAEKIKKLREMTDSGFLDCKKALEATKNDLNAAVKWLQENGKAKAAKKADRITAEGLVAAFSNDKYGVIIEINSETDFVAKNQKFKDLVNKIGQELLKHDFYKYKNIIEEVKIGNETLAELVASASATIGEKLTFRRAEQVKKFNSKQVIGVYNHFDGQKAAVLIIENGTEDMAKQLSMHITAMNPLFLDEKEVPEKEIKKLRSEFEKDEQIQLKPEKIRPKIIEGMINKKLSETTFTLQEFVVEPGQSIKQYMNSKNSFPISKIRYEVGEGIEKQVVDFASEVANQMKNKA</sequence>
<protein>
    <recommendedName>
        <fullName evidence="1">Elongation factor Ts</fullName>
        <shortName evidence="1">EF-Ts</shortName>
    </recommendedName>
</protein>
<evidence type="ECO:0000255" key="1">
    <source>
        <dbReference type="HAMAP-Rule" id="MF_00050"/>
    </source>
</evidence>
<feature type="chain" id="PRO_0000161154" description="Elongation factor Ts">
    <location>
        <begin position="1"/>
        <end position="294"/>
    </location>
</feature>
<feature type="region of interest" description="Involved in Mg(2+) ion dislocation from EF-Tu" evidence="1">
    <location>
        <begin position="78"/>
        <end position="81"/>
    </location>
</feature>
<gene>
    <name evidence="1" type="primary">tsf</name>
    <name type="ordered locus">MMOB1770</name>
</gene>
<accession>Q6KIB3</accession>
<comment type="function">
    <text evidence="1">Associates with the EF-Tu.GDP complex and induces the exchange of GDP to GTP. It remains bound to the aminoacyl-tRNA.EF-Tu.GTP complex up to the GTP hydrolysis stage on the ribosome.</text>
</comment>
<comment type="subcellular location">
    <subcellularLocation>
        <location evidence="1">Cytoplasm</location>
    </subcellularLocation>
</comment>
<comment type="similarity">
    <text evidence="1">Belongs to the EF-Ts family.</text>
</comment>
<name>EFTS_MYCM1</name>
<dbReference type="EMBL" id="AE017308">
    <property type="protein sequence ID" value="AAT27663.1"/>
    <property type="molecule type" value="Genomic_DNA"/>
</dbReference>
<dbReference type="RefSeq" id="WP_011264697.1">
    <property type="nucleotide sequence ID" value="NC_006908.1"/>
</dbReference>
<dbReference type="SMR" id="Q6KIB3"/>
<dbReference type="STRING" id="267748.MMOB1770"/>
<dbReference type="KEGG" id="mmo:MMOB1770"/>
<dbReference type="eggNOG" id="COG0264">
    <property type="taxonomic scope" value="Bacteria"/>
</dbReference>
<dbReference type="HOGENOM" id="CLU_047155_0_2_14"/>
<dbReference type="OrthoDB" id="9808348at2"/>
<dbReference type="Proteomes" id="UP000009072">
    <property type="component" value="Chromosome"/>
</dbReference>
<dbReference type="GO" id="GO:0005737">
    <property type="term" value="C:cytoplasm"/>
    <property type="evidence" value="ECO:0007669"/>
    <property type="project" value="UniProtKB-SubCell"/>
</dbReference>
<dbReference type="GO" id="GO:0003746">
    <property type="term" value="F:translation elongation factor activity"/>
    <property type="evidence" value="ECO:0007669"/>
    <property type="project" value="UniProtKB-UniRule"/>
</dbReference>
<dbReference type="CDD" id="cd14275">
    <property type="entry name" value="UBA_EF-Ts"/>
    <property type="match status" value="1"/>
</dbReference>
<dbReference type="FunFam" id="1.10.8.10:FF:000001">
    <property type="entry name" value="Elongation factor Ts"/>
    <property type="match status" value="1"/>
</dbReference>
<dbReference type="Gene3D" id="1.10.286.20">
    <property type="match status" value="1"/>
</dbReference>
<dbReference type="Gene3D" id="1.10.8.10">
    <property type="entry name" value="DNA helicase RuvA subunit, C-terminal domain"/>
    <property type="match status" value="1"/>
</dbReference>
<dbReference type="Gene3D" id="3.30.479.20">
    <property type="entry name" value="Elongation factor Ts, dimerisation domain"/>
    <property type="match status" value="2"/>
</dbReference>
<dbReference type="HAMAP" id="MF_00050">
    <property type="entry name" value="EF_Ts"/>
    <property type="match status" value="1"/>
</dbReference>
<dbReference type="InterPro" id="IPR036402">
    <property type="entry name" value="EF-Ts_dimer_sf"/>
</dbReference>
<dbReference type="InterPro" id="IPR001816">
    <property type="entry name" value="Transl_elong_EFTs/EF1B"/>
</dbReference>
<dbReference type="InterPro" id="IPR014039">
    <property type="entry name" value="Transl_elong_EFTs/EF1B_dimer"/>
</dbReference>
<dbReference type="InterPro" id="IPR018101">
    <property type="entry name" value="Transl_elong_Ts_CS"/>
</dbReference>
<dbReference type="InterPro" id="IPR015940">
    <property type="entry name" value="UBA"/>
</dbReference>
<dbReference type="InterPro" id="IPR009060">
    <property type="entry name" value="UBA-like_sf"/>
</dbReference>
<dbReference type="NCBIfam" id="TIGR00116">
    <property type="entry name" value="tsf"/>
    <property type="match status" value="1"/>
</dbReference>
<dbReference type="PANTHER" id="PTHR11741">
    <property type="entry name" value="ELONGATION FACTOR TS"/>
    <property type="match status" value="1"/>
</dbReference>
<dbReference type="PANTHER" id="PTHR11741:SF0">
    <property type="entry name" value="ELONGATION FACTOR TS, MITOCHONDRIAL"/>
    <property type="match status" value="1"/>
</dbReference>
<dbReference type="Pfam" id="PF00889">
    <property type="entry name" value="EF_TS"/>
    <property type="match status" value="1"/>
</dbReference>
<dbReference type="SMART" id="SM00165">
    <property type="entry name" value="UBA"/>
    <property type="match status" value="1"/>
</dbReference>
<dbReference type="SUPFAM" id="SSF54713">
    <property type="entry name" value="Elongation factor Ts (EF-Ts), dimerisation domain"/>
    <property type="match status" value="2"/>
</dbReference>
<dbReference type="SUPFAM" id="SSF46934">
    <property type="entry name" value="UBA-like"/>
    <property type="match status" value="1"/>
</dbReference>
<dbReference type="PROSITE" id="PS01126">
    <property type="entry name" value="EF_TS_1"/>
    <property type="match status" value="1"/>
</dbReference>
<dbReference type="PROSITE" id="PS01127">
    <property type="entry name" value="EF_TS_2"/>
    <property type="match status" value="1"/>
</dbReference>
<organism>
    <name type="scientific">Mycoplasma mobile (strain ATCC 43663 / 163K / NCTC 11711)</name>
    <name type="common">Mesomycoplasma mobile</name>
    <dbReference type="NCBI Taxonomy" id="267748"/>
    <lineage>
        <taxon>Bacteria</taxon>
        <taxon>Bacillati</taxon>
        <taxon>Mycoplasmatota</taxon>
        <taxon>Mycoplasmoidales</taxon>
        <taxon>Metamycoplasmataceae</taxon>
        <taxon>Mesomycoplasma</taxon>
    </lineage>
</organism>
<proteinExistence type="inferred from homology"/>
<reference key="1">
    <citation type="journal article" date="2004" name="Genome Res.">
        <title>The complete genome and proteome of Mycoplasma mobile.</title>
        <authorList>
            <person name="Jaffe J.D."/>
            <person name="Stange-Thomann N."/>
            <person name="Smith C."/>
            <person name="DeCaprio D."/>
            <person name="Fisher S."/>
            <person name="Butler J."/>
            <person name="Calvo S."/>
            <person name="Elkins T."/>
            <person name="FitzGerald M.G."/>
            <person name="Hafez N."/>
            <person name="Kodira C.D."/>
            <person name="Major J."/>
            <person name="Wang S."/>
            <person name="Wilkinson J."/>
            <person name="Nicol R."/>
            <person name="Nusbaum C."/>
            <person name="Birren B."/>
            <person name="Berg H.C."/>
            <person name="Church G.M."/>
        </authorList>
    </citation>
    <scope>NUCLEOTIDE SEQUENCE [LARGE SCALE GENOMIC DNA]</scope>
    <source>
        <strain>ATCC 43663 / NCTC 11711 / 163 K</strain>
    </source>
</reference>
<keyword id="KW-0963">Cytoplasm</keyword>
<keyword id="KW-0251">Elongation factor</keyword>
<keyword id="KW-0648">Protein biosynthesis</keyword>
<keyword id="KW-1185">Reference proteome</keyword>